<keyword id="KW-0067">ATP-binding</keyword>
<keyword id="KW-0963">Cytoplasm</keyword>
<keyword id="KW-0418">Kinase</keyword>
<keyword id="KW-0460">Magnesium</keyword>
<keyword id="KW-0479">Metal-binding</keyword>
<keyword id="KW-0547">Nucleotide-binding</keyword>
<keyword id="KW-1185">Reference proteome</keyword>
<keyword id="KW-0808">Transferase</keyword>
<gene>
    <name evidence="1" type="primary">ackA</name>
    <name type="ordered locus">BH3192</name>
</gene>
<evidence type="ECO:0000255" key="1">
    <source>
        <dbReference type="HAMAP-Rule" id="MF_00020"/>
    </source>
</evidence>
<sequence length="391" mass="42766">MAINAGSSSLKFQLLNMPEEELVTKGVVERIGLGDGIFTIEVKGEKVTETFDIPDHAFAVKTLLEKLTSHEIIQSLDEIEGIGHRVVHGGEKFNDSVLITDEVIQGIEECNELAPLHNPANIVGIRAFKEVLPNVPAVAVFDTAFHQTMPESSFLYSLPYDYYKEFGIRKYGFHGTSHKYVSQRAAELLGRPIEQLRLLSCHLGNGASIAAIDGGKSIDTSMGFTPLAGVTMGTRSGNIDPALIPFIMEKTGQTANEVINTLNKKSGLLGVSGFSSDLRDIEEQAGEGNDRAELALEVFTSRIHKYIGSYAARMSGVDAIIFTAGIGENSTVIRERVLRGLEFMGVYWDPSLNQVRGKEAFINYPHSPVKVLVIPTNEEVMIARDTVRLAQ</sequence>
<feature type="chain" id="PRO_0000107530" description="Acetate kinase">
    <location>
        <begin position="1"/>
        <end position="391"/>
    </location>
</feature>
<feature type="active site" description="Proton donor/acceptor" evidence="1">
    <location>
        <position position="142"/>
    </location>
</feature>
<feature type="binding site" evidence="1">
    <location>
        <position position="4"/>
    </location>
    <ligand>
        <name>Mg(2+)</name>
        <dbReference type="ChEBI" id="CHEBI:18420"/>
    </ligand>
</feature>
<feature type="binding site" evidence="1">
    <location>
        <position position="11"/>
    </location>
    <ligand>
        <name>ATP</name>
        <dbReference type="ChEBI" id="CHEBI:30616"/>
    </ligand>
</feature>
<feature type="binding site" evidence="1">
    <location>
        <position position="85"/>
    </location>
    <ligand>
        <name>substrate</name>
    </ligand>
</feature>
<feature type="binding site" evidence="1">
    <location>
        <begin position="202"/>
        <end position="206"/>
    </location>
    <ligand>
        <name>ATP</name>
        <dbReference type="ChEBI" id="CHEBI:30616"/>
    </ligand>
</feature>
<feature type="binding site" evidence="1">
    <location>
        <begin position="277"/>
        <end position="279"/>
    </location>
    <ligand>
        <name>ATP</name>
        <dbReference type="ChEBI" id="CHEBI:30616"/>
    </ligand>
</feature>
<feature type="binding site" evidence="1">
    <location>
        <begin position="325"/>
        <end position="329"/>
    </location>
    <ligand>
        <name>ATP</name>
        <dbReference type="ChEBI" id="CHEBI:30616"/>
    </ligand>
</feature>
<feature type="binding site" evidence="1">
    <location>
        <position position="378"/>
    </location>
    <ligand>
        <name>Mg(2+)</name>
        <dbReference type="ChEBI" id="CHEBI:18420"/>
    </ligand>
</feature>
<feature type="site" description="Transition state stabilizer" evidence="1">
    <location>
        <position position="174"/>
    </location>
</feature>
<feature type="site" description="Transition state stabilizer" evidence="1">
    <location>
        <position position="235"/>
    </location>
</feature>
<dbReference type="EC" id="2.7.2.1" evidence="1"/>
<dbReference type="EMBL" id="BA000004">
    <property type="protein sequence ID" value="BAB06911.1"/>
    <property type="molecule type" value="Genomic_DNA"/>
</dbReference>
<dbReference type="PIR" id="H84048">
    <property type="entry name" value="H84048"/>
</dbReference>
<dbReference type="SMR" id="Q9K815"/>
<dbReference type="STRING" id="272558.gene:10729104"/>
<dbReference type="KEGG" id="bha:BH3192"/>
<dbReference type="eggNOG" id="COG0282">
    <property type="taxonomic scope" value="Bacteria"/>
</dbReference>
<dbReference type="HOGENOM" id="CLU_020352_0_1_9"/>
<dbReference type="UniPathway" id="UPA00340">
    <property type="reaction ID" value="UER00458"/>
</dbReference>
<dbReference type="Proteomes" id="UP000001258">
    <property type="component" value="Chromosome"/>
</dbReference>
<dbReference type="GO" id="GO:0005737">
    <property type="term" value="C:cytoplasm"/>
    <property type="evidence" value="ECO:0007669"/>
    <property type="project" value="UniProtKB-SubCell"/>
</dbReference>
<dbReference type="GO" id="GO:0008776">
    <property type="term" value="F:acetate kinase activity"/>
    <property type="evidence" value="ECO:0007669"/>
    <property type="project" value="UniProtKB-UniRule"/>
</dbReference>
<dbReference type="GO" id="GO:0005524">
    <property type="term" value="F:ATP binding"/>
    <property type="evidence" value="ECO:0007669"/>
    <property type="project" value="UniProtKB-KW"/>
</dbReference>
<dbReference type="GO" id="GO:0000287">
    <property type="term" value="F:magnesium ion binding"/>
    <property type="evidence" value="ECO:0007669"/>
    <property type="project" value="UniProtKB-UniRule"/>
</dbReference>
<dbReference type="GO" id="GO:0006083">
    <property type="term" value="P:acetate metabolic process"/>
    <property type="evidence" value="ECO:0007669"/>
    <property type="project" value="TreeGrafter"/>
</dbReference>
<dbReference type="GO" id="GO:0006085">
    <property type="term" value="P:acetyl-CoA biosynthetic process"/>
    <property type="evidence" value="ECO:0007669"/>
    <property type="project" value="UniProtKB-UniRule"/>
</dbReference>
<dbReference type="CDD" id="cd24010">
    <property type="entry name" value="ASKHA_NBD_AcK_PK"/>
    <property type="match status" value="1"/>
</dbReference>
<dbReference type="Gene3D" id="3.30.420.40">
    <property type="match status" value="2"/>
</dbReference>
<dbReference type="HAMAP" id="MF_00020">
    <property type="entry name" value="Acetate_kinase"/>
    <property type="match status" value="1"/>
</dbReference>
<dbReference type="InterPro" id="IPR004372">
    <property type="entry name" value="Ac/propionate_kinase"/>
</dbReference>
<dbReference type="InterPro" id="IPR000890">
    <property type="entry name" value="Aliphatic_acid_kin_short-chain"/>
</dbReference>
<dbReference type="InterPro" id="IPR023865">
    <property type="entry name" value="Aliphatic_acid_kinase_CS"/>
</dbReference>
<dbReference type="InterPro" id="IPR043129">
    <property type="entry name" value="ATPase_NBD"/>
</dbReference>
<dbReference type="NCBIfam" id="TIGR00016">
    <property type="entry name" value="ackA"/>
    <property type="match status" value="1"/>
</dbReference>
<dbReference type="PANTHER" id="PTHR21060">
    <property type="entry name" value="ACETATE KINASE"/>
    <property type="match status" value="1"/>
</dbReference>
<dbReference type="PANTHER" id="PTHR21060:SF15">
    <property type="entry name" value="ACETATE KINASE-RELATED"/>
    <property type="match status" value="1"/>
</dbReference>
<dbReference type="Pfam" id="PF00871">
    <property type="entry name" value="Acetate_kinase"/>
    <property type="match status" value="1"/>
</dbReference>
<dbReference type="PIRSF" id="PIRSF000722">
    <property type="entry name" value="Acetate_prop_kin"/>
    <property type="match status" value="1"/>
</dbReference>
<dbReference type="PRINTS" id="PR00471">
    <property type="entry name" value="ACETATEKNASE"/>
</dbReference>
<dbReference type="SUPFAM" id="SSF53067">
    <property type="entry name" value="Actin-like ATPase domain"/>
    <property type="match status" value="2"/>
</dbReference>
<dbReference type="PROSITE" id="PS01076">
    <property type="entry name" value="ACETATE_KINASE_2"/>
    <property type="match status" value="1"/>
</dbReference>
<reference key="1">
    <citation type="journal article" date="2000" name="Nucleic Acids Res.">
        <title>Complete genome sequence of the alkaliphilic bacterium Bacillus halodurans and genomic sequence comparison with Bacillus subtilis.</title>
        <authorList>
            <person name="Takami H."/>
            <person name="Nakasone K."/>
            <person name="Takaki Y."/>
            <person name="Maeno G."/>
            <person name="Sasaki R."/>
            <person name="Masui N."/>
            <person name="Fuji F."/>
            <person name="Hirama C."/>
            <person name="Nakamura Y."/>
            <person name="Ogasawara N."/>
            <person name="Kuhara S."/>
            <person name="Horikoshi K."/>
        </authorList>
    </citation>
    <scope>NUCLEOTIDE SEQUENCE [LARGE SCALE GENOMIC DNA]</scope>
    <source>
        <strain>ATCC BAA-125 / DSM 18197 / FERM 7344 / JCM 9153 / C-125</strain>
    </source>
</reference>
<proteinExistence type="inferred from homology"/>
<accession>Q9K815</accession>
<protein>
    <recommendedName>
        <fullName evidence="1">Acetate kinase</fullName>
        <ecNumber evidence="1">2.7.2.1</ecNumber>
    </recommendedName>
    <alternativeName>
        <fullName evidence="1">Acetokinase</fullName>
    </alternativeName>
</protein>
<organism>
    <name type="scientific">Halalkalibacterium halodurans (strain ATCC BAA-125 / DSM 18197 / FERM 7344 / JCM 9153 / C-125)</name>
    <name type="common">Bacillus halodurans</name>
    <dbReference type="NCBI Taxonomy" id="272558"/>
    <lineage>
        <taxon>Bacteria</taxon>
        <taxon>Bacillati</taxon>
        <taxon>Bacillota</taxon>
        <taxon>Bacilli</taxon>
        <taxon>Bacillales</taxon>
        <taxon>Bacillaceae</taxon>
        <taxon>Halalkalibacterium (ex Joshi et al. 2022)</taxon>
    </lineage>
</organism>
<name>ACKA_HALH5</name>
<comment type="function">
    <text evidence="1">Catalyzes the formation of acetyl phosphate from acetate and ATP. Can also catalyze the reverse reaction.</text>
</comment>
<comment type="catalytic activity">
    <reaction evidence="1">
        <text>acetate + ATP = acetyl phosphate + ADP</text>
        <dbReference type="Rhea" id="RHEA:11352"/>
        <dbReference type="ChEBI" id="CHEBI:22191"/>
        <dbReference type="ChEBI" id="CHEBI:30089"/>
        <dbReference type="ChEBI" id="CHEBI:30616"/>
        <dbReference type="ChEBI" id="CHEBI:456216"/>
        <dbReference type="EC" id="2.7.2.1"/>
    </reaction>
</comment>
<comment type="cofactor">
    <cofactor evidence="1">
        <name>Mg(2+)</name>
        <dbReference type="ChEBI" id="CHEBI:18420"/>
    </cofactor>
    <cofactor evidence="1">
        <name>Mn(2+)</name>
        <dbReference type="ChEBI" id="CHEBI:29035"/>
    </cofactor>
    <text evidence="1">Mg(2+). Can also accept Mn(2+).</text>
</comment>
<comment type="pathway">
    <text evidence="1">Metabolic intermediate biosynthesis; acetyl-CoA biosynthesis; acetyl-CoA from acetate: step 1/2.</text>
</comment>
<comment type="subunit">
    <text evidence="1">Homodimer.</text>
</comment>
<comment type="subcellular location">
    <subcellularLocation>
        <location evidence="1">Cytoplasm</location>
    </subcellularLocation>
</comment>
<comment type="similarity">
    <text evidence="1">Belongs to the acetokinase family.</text>
</comment>